<reference key="1">
    <citation type="journal article" date="1989" name="Mol. Microbiol.">
        <title>Sequence of the nagBACD operon in Escherichia coli K12 and pattern of transcription within the nag regulon.</title>
        <authorList>
            <person name="Plumbridge J."/>
        </authorList>
    </citation>
    <scope>NUCLEOTIDE SEQUENCE [GENOMIC DNA]</scope>
    <scope>INDUCTION BY N-ACETYL GLUCOSAMINE</scope>
    <source>
        <strain>K12</strain>
    </source>
</reference>
<reference key="2">
    <citation type="journal article" date="1990" name="Biochem. Cell Biol.">
        <title>Cloning and characterization of the N-acetylglucosamine operon of Escherichia coli.</title>
        <authorList>
            <person name="Peri K.G."/>
            <person name="Goldie H."/>
            <person name="Waygood E.B."/>
        </authorList>
    </citation>
    <scope>NUCLEOTIDE SEQUENCE [GENOMIC DNA]</scope>
    <source>
        <strain>K12</strain>
    </source>
</reference>
<reference key="3">
    <citation type="journal article" date="1996" name="DNA Res.">
        <title>A 718-kb DNA sequence of the Escherichia coli K-12 genome corresponding to the 12.7-28.0 min region on the linkage map.</title>
        <authorList>
            <person name="Oshima T."/>
            <person name="Aiba H."/>
            <person name="Baba T."/>
            <person name="Fujita K."/>
            <person name="Hayashi K."/>
            <person name="Honjo A."/>
            <person name="Ikemoto K."/>
            <person name="Inada T."/>
            <person name="Itoh T."/>
            <person name="Kajihara M."/>
            <person name="Kanai K."/>
            <person name="Kashimoto K."/>
            <person name="Kimura S."/>
            <person name="Kitagawa M."/>
            <person name="Makino K."/>
            <person name="Masuda S."/>
            <person name="Miki T."/>
            <person name="Mizobuchi K."/>
            <person name="Mori H."/>
            <person name="Motomura K."/>
            <person name="Nakamura Y."/>
            <person name="Nashimoto H."/>
            <person name="Nishio Y."/>
            <person name="Saito N."/>
            <person name="Sampei G."/>
            <person name="Seki Y."/>
            <person name="Tagami H."/>
            <person name="Takemoto K."/>
            <person name="Wada C."/>
            <person name="Yamamoto Y."/>
            <person name="Yano M."/>
            <person name="Horiuchi T."/>
        </authorList>
    </citation>
    <scope>NUCLEOTIDE SEQUENCE [LARGE SCALE GENOMIC DNA]</scope>
    <source>
        <strain>K12 / W3110 / ATCC 27325 / DSM 5911</strain>
    </source>
</reference>
<reference key="4">
    <citation type="journal article" date="1997" name="Science">
        <title>The complete genome sequence of Escherichia coli K-12.</title>
        <authorList>
            <person name="Blattner F.R."/>
            <person name="Plunkett G. III"/>
            <person name="Bloch C.A."/>
            <person name="Perna N.T."/>
            <person name="Burland V."/>
            <person name="Riley M."/>
            <person name="Collado-Vides J."/>
            <person name="Glasner J.D."/>
            <person name="Rode C.K."/>
            <person name="Mayhew G.F."/>
            <person name="Gregor J."/>
            <person name="Davis N.W."/>
            <person name="Kirkpatrick H.A."/>
            <person name="Goeden M.A."/>
            <person name="Rose D.J."/>
            <person name="Mau B."/>
            <person name="Shao Y."/>
        </authorList>
    </citation>
    <scope>NUCLEOTIDE SEQUENCE [LARGE SCALE GENOMIC DNA]</scope>
    <source>
        <strain>K12 / MG1655 / ATCC 47076</strain>
    </source>
</reference>
<reference key="5">
    <citation type="journal article" date="2006" name="Mol. Syst. Biol.">
        <title>Highly accurate genome sequences of Escherichia coli K-12 strains MG1655 and W3110.</title>
        <authorList>
            <person name="Hayashi K."/>
            <person name="Morooka N."/>
            <person name="Yamamoto Y."/>
            <person name="Fujita K."/>
            <person name="Isono K."/>
            <person name="Choi S."/>
            <person name="Ohtsubo E."/>
            <person name="Baba T."/>
            <person name="Wanner B.L."/>
            <person name="Mori H."/>
            <person name="Horiuchi T."/>
        </authorList>
    </citation>
    <scope>NUCLEOTIDE SEQUENCE [LARGE SCALE GENOMIC DNA]</scope>
    <source>
        <strain>K12 / W3110 / ATCC 27325 / DSM 5911</strain>
    </source>
</reference>
<reference key="6">
    <citation type="journal article" date="1995" name="EMBO J.">
        <title>Co-ordinated regulation of amino sugar biosynthesis and degradation: the NagC repressor acts as both an activator and a repressor for the transcription of the glmUS operon and requires two separated NagC binding sites.</title>
        <authorList>
            <person name="Plumbridge J."/>
        </authorList>
    </citation>
    <scope>FUNCTION</scope>
    <scope>DNA-BINDING</scope>
</reference>
<reference key="7">
    <citation type="journal article" date="2022" name="G3 (Bethesda)">
        <title>Identification of genetic interactions with priB links the PriA/PriB DNA replication restart pathway to double-strand DNA break repair in Escherichia coli.</title>
        <authorList>
            <person name="McKenzie A.M."/>
            <person name="Henry C."/>
            <person name="Myers K.S."/>
            <person name="Place M.M."/>
            <person name="Keck J.L."/>
        </authorList>
    </citation>
    <scope>GENETIC INTERACTION</scope>
    <scope>DISRUPTION PHENOTYPE</scope>
    <source>
        <strain>K12 / MG1655 / ATCC 47076</strain>
    </source>
</reference>
<accession>P0AF20</accession>
<accession>P15301</accession>
<evidence type="ECO:0000250" key="1"/>
<evidence type="ECO:0000269" key="2">
    <source>
    </source>
</evidence>
<evidence type="ECO:0000269" key="3">
    <source>
    </source>
</evidence>
<evidence type="ECO:0000269" key="4">
    <source>
    </source>
</evidence>
<evidence type="ECO:0000303" key="5">
    <source>
    </source>
</evidence>
<evidence type="ECO:0000303" key="6">
    <source>
    </source>
</evidence>
<evidence type="ECO:0000305" key="7"/>
<feature type="chain" id="PRO_0000095691" description="DNA-binding transcriptional dual regulator NagC">
    <location>
        <begin position="1"/>
        <end position="406"/>
    </location>
</feature>
<feature type="DNA-binding region" description="H-T-H motif" evidence="1">
    <location>
        <begin position="35"/>
        <end position="44"/>
    </location>
</feature>
<feature type="sequence conflict" description="In Ref. 1; CAA32354." evidence="7" ref="1">
    <original>EH</original>
    <variation>DD</variation>
    <location>
        <begin position="203"/>
        <end position="204"/>
    </location>
</feature>
<sequence length="406" mass="44541">MTPGGQAQIGNVDLVKQLNSAAVYRLIDQYGPISRIQIAEQSQLAPASVTKITRQLIERGLIKEVDQQASTGGRRAISIVTETRNFHAIGVRLGRHDATITLFDLSSKVLAEEHYPLPERTQQTLEHALLNAIAQFIDSYQRKLRELIAISVILPGLVDPDSGKIHYMPHIQVENWGLVEALEERFKVTCFVGHDIRSLALAEHYFGASQDCEDSILVRVHRGTGAGIISNGRIFIGRNGNVGEIGHIQVEPLGERCHCGNFGCLETIAANAAIEQRVLNLLKQGYQSRVPLDDCTIKTICKAANKGDSLASEVIEYVGRHLGKTIAIAINLFNPQKIVIAGEITEADKVLLPAIESCINTQALKAFRTNLPVVRSELDHRSAIGAFALVKRAMLNGILLQHLLEN</sequence>
<organism>
    <name type="scientific">Escherichia coli (strain K12)</name>
    <dbReference type="NCBI Taxonomy" id="83333"/>
    <lineage>
        <taxon>Bacteria</taxon>
        <taxon>Pseudomonadati</taxon>
        <taxon>Pseudomonadota</taxon>
        <taxon>Gammaproteobacteria</taxon>
        <taxon>Enterobacterales</taxon>
        <taxon>Enterobacteriaceae</taxon>
        <taxon>Escherichia</taxon>
    </lineage>
</organism>
<protein>
    <recommendedName>
        <fullName evidence="7">DNA-binding transcriptional dual regulator NagC</fullName>
    </recommendedName>
    <alternativeName>
        <fullName>N-acetylglucosamine repressor</fullName>
        <shortName evidence="6">NagC repressor</shortName>
    </alternativeName>
</protein>
<gene>
    <name evidence="5" type="primary">nagC</name>
    <name type="synonym">nagR</name>
    <name type="ordered locus">b0676</name>
    <name type="ordered locus">JW0662</name>
</gene>
<dbReference type="EMBL" id="X14135">
    <property type="protein sequence ID" value="CAA32354.1"/>
    <property type="molecule type" value="Genomic_DNA"/>
</dbReference>
<dbReference type="EMBL" id="AF052007">
    <property type="protein sequence ID" value="AAC09326.1"/>
    <property type="molecule type" value="Genomic_DNA"/>
</dbReference>
<dbReference type="EMBL" id="U00096">
    <property type="protein sequence ID" value="AAC73770.1"/>
    <property type="molecule type" value="Genomic_DNA"/>
</dbReference>
<dbReference type="EMBL" id="AP009048">
    <property type="protein sequence ID" value="BAA35319.1"/>
    <property type="molecule type" value="Genomic_DNA"/>
</dbReference>
<dbReference type="PIR" id="C64802">
    <property type="entry name" value="C64802"/>
</dbReference>
<dbReference type="RefSeq" id="NP_415202.1">
    <property type="nucleotide sequence ID" value="NC_000913.3"/>
</dbReference>
<dbReference type="RefSeq" id="WP_000187594.1">
    <property type="nucleotide sequence ID" value="NZ_STEB01000044.1"/>
</dbReference>
<dbReference type="SMR" id="P0AF20"/>
<dbReference type="BioGRID" id="4261210">
    <property type="interactions" value="142"/>
</dbReference>
<dbReference type="DIP" id="DIP-35984N"/>
<dbReference type="FunCoup" id="P0AF20">
    <property type="interactions" value="267"/>
</dbReference>
<dbReference type="IntAct" id="P0AF20">
    <property type="interactions" value="9"/>
</dbReference>
<dbReference type="STRING" id="511145.b0676"/>
<dbReference type="jPOST" id="P0AF20"/>
<dbReference type="PaxDb" id="511145-b0676"/>
<dbReference type="EnsemblBacteria" id="AAC73770">
    <property type="protein sequence ID" value="AAC73770"/>
    <property type="gene ID" value="b0676"/>
</dbReference>
<dbReference type="GeneID" id="93776809"/>
<dbReference type="GeneID" id="945285"/>
<dbReference type="KEGG" id="ecj:JW0662"/>
<dbReference type="KEGG" id="eco:b0676"/>
<dbReference type="KEGG" id="ecoc:C3026_03360"/>
<dbReference type="PATRIC" id="fig|1411691.4.peg.1602"/>
<dbReference type="EchoBASE" id="EB0630"/>
<dbReference type="eggNOG" id="COG1846">
    <property type="taxonomic scope" value="Bacteria"/>
</dbReference>
<dbReference type="eggNOG" id="COG1940">
    <property type="taxonomic scope" value="Bacteria"/>
</dbReference>
<dbReference type="HOGENOM" id="CLU_036604_13_1_6"/>
<dbReference type="InParanoid" id="P0AF20"/>
<dbReference type="OMA" id="GVANLCN"/>
<dbReference type="OrthoDB" id="3189808at2"/>
<dbReference type="PhylomeDB" id="P0AF20"/>
<dbReference type="BioCyc" id="EcoCyc:PD00266"/>
<dbReference type="PRO" id="PR:P0AF20"/>
<dbReference type="Proteomes" id="UP000000625">
    <property type="component" value="Chromosome"/>
</dbReference>
<dbReference type="GO" id="GO:0003677">
    <property type="term" value="F:DNA binding"/>
    <property type="evidence" value="ECO:0000314"/>
    <property type="project" value="EcoCyc"/>
</dbReference>
<dbReference type="GO" id="GO:0003700">
    <property type="term" value="F:DNA-binding transcription factor activity"/>
    <property type="evidence" value="ECO:0007669"/>
    <property type="project" value="InterPro"/>
</dbReference>
<dbReference type="GO" id="GO:0006355">
    <property type="term" value="P:regulation of DNA-templated transcription"/>
    <property type="evidence" value="ECO:0000315"/>
    <property type="project" value="EcoCyc"/>
</dbReference>
<dbReference type="CDD" id="cd24075">
    <property type="entry name" value="ASKHA_ATPase_ROK_NagC"/>
    <property type="match status" value="1"/>
</dbReference>
<dbReference type="FunFam" id="3.30.420.40:FF:000059">
    <property type="entry name" value="N-acetylglucosamine operon transcriptional repressor"/>
    <property type="match status" value="1"/>
</dbReference>
<dbReference type="FunFam" id="3.30.420.40:FF:000065">
    <property type="entry name" value="N-acetylglucosamine repressor NagC"/>
    <property type="match status" value="1"/>
</dbReference>
<dbReference type="FunFam" id="1.10.10.10:FF:000045">
    <property type="entry name" value="ROK family transcriptional regulator"/>
    <property type="match status" value="1"/>
</dbReference>
<dbReference type="Gene3D" id="3.30.420.40">
    <property type="match status" value="2"/>
</dbReference>
<dbReference type="Gene3D" id="1.10.10.10">
    <property type="entry name" value="Winged helix-like DNA-binding domain superfamily/Winged helix DNA-binding domain"/>
    <property type="match status" value="1"/>
</dbReference>
<dbReference type="InterPro" id="IPR043129">
    <property type="entry name" value="ATPase_NBD"/>
</dbReference>
<dbReference type="InterPro" id="IPR000835">
    <property type="entry name" value="HTH_MarR-typ"/>
</dbReference>
<dbReference type="InterPro" id="IPR000600">
    <property type="entry name" value="ROK"/>
</dbReference>
<dbReference type="InterPro" id="IPR049874">
    <property type="entry name" value="ROK_cs"/>
</dbReference>
<dbReference type="InterPro" id="IPR036388">
    <property type="entry name" value="WH-like_DNA-bd_sf"/>
</dbReference>
<dbReference type="InterPro" id="IPR036390">
    <property type="entry name" value="WH_DNA-bd_sf"/>
</dbReference>
<dbReference type="PANTHER" id="PTHR18964:SF175">
    <property type="entry name" value="N-ACETYLGLUCOSAMINE REPRESSOR"/>
    <property type="match status" value="1"/>
</dbReference>
<dbReference type="PANTHER" id="PTHR18964">
    <property type="entry name" value="ROK (REPRESSOR, ORF, KINASE) FAMILY"/>
    <property type="match status" value="1"/>
</dbReference>
<dbReference type="Pfam" id="PF01047">
    <property type="entry name" value="MarR"/>
    <property type="match status" value="1"/>
</dbReference>
<dbReference type="Pfam" id="PF00480">
    <property type="entry name" value="ROK"/>
    <property type="match status" value="1"/>
</dbReference>
<dbReference type="SUPFAM" id="SSF53067">
    <property type="entry name" value="Actin-like ATPase domain"/>
    <property type="match status" value="1"/>
</dbReference>
<dbReference type="SUPFAM" id="SSF46785">
    <property type="entry name" value="Winged helix' DNA-binding domain"/>
    <property type="match status" value="1"/>
</dbReference>
<dbReference type="PROSITE" id="PS01125">
    <property type="entry name" value="ROK"/>
    <property type="match status" value="1"/>
</dbReference>
<proteinExistence type="evidence at protein level"/>
<comment type="function">
    <text evidence="4">Acts as a repressor of the nagEBACD operon and acts both as an activator and a repressor for the transcription of the glmSU operon (PubMed:7545108). Genetic interactions among priB, dam, lexA, nagC, polA, rdgB, rdgB, rep and uup link the PriA-PriB replication restart pathway to DNA double-strand break repair (PubMed:36326440).</text>
</comment>
<comment type="induction">
    <text evidence="2">By N-acetylglucosamine.</text>
</comment>
<comment type="disruption phenotype">
    <text evidence="3">A double deletion with priB is disadvantageous to cells.</text>
</comment>
<comment type="similarity">
    <text evidence="7">Belongs to the ROK (NagC/XylR) family.</text>
</comment>
<keyword id="KW-0010">Activator</keyword>
<keyword id="KW-0119">Carbohydrate metabolism</keyword>
<keyword id="KW-0238">DNA-binding</keyword>
<keyword id="KW-1185">Reference proteome</keyword>
<keyword id="KW-0678">Repressor</keyword>
<keyword id="KW-0804">Transcription</keyword>
<keyword id="KW-0805">Transcription regulation</keyword>
<name>NAGC_ECOLI</name>